<gene>
    <name type="primary">SHU2</name>
    <name type="ORF">SCY_0981</name>
</gene>
<comment type="function">
    <text evidence="1">Plays a role in a RAD51/RAD54-dependent homologous recombination repair (HRR) pathway to repair MMS-induced lesions during S-phase. Required for error-free repair of spontaneous and induced DNA lesions to protect the genome from mutation (By similarity).</text>
</comment>
<comment type="subunit">
    <text evidence="1">Component of the SHU complex composed of at least CSM2, PSY3, SHU1 and SHU2.</text>
</comment>
<comment type="subcellular location">
    <subcellularLocation>
        <location evidence="1">Nucleus</location>
    </subcellularLocation>
</comment>
<comment type="similarity">
    <text evidence="2">Belongs to the SHU2 family.</text>
</comment>
<proteinExistence type="inferred from homology"/>
<feature type="chain" id="PRO_0000409739" description="Suppressor of hydroxyurea sensitivity protein 2">
    <location>
        <begin position="1"/>
        <end position="223"/>
    </location>
</feature>
<evidence type="ECO:0000250" key="1"/>
<evidence type="ECO:0000305" key="2"/>
<organism>
    <name type="scientific">Saccharomyces cerevisiae (strain YJM789)</name>
    <name type="common">Baker's yeast</name>
    <dbReference type="NCBI Taxonomy" id="307796"/>
    <lineage>
        <taxon>Eukaryota</taxon>
        <taxon>Fungi</taxon>
        <taxon>Dikarya</taxon>
        <taxon>Ascomycota</taxon>
        <taxon>Saccharomycotina</taxon>
        <taxon>Saccharomycetes</taxon>
        <taxon>Saccharomycetales</taxon>
        <taxon>Saccharomycetaceae</taxon>
        <taxon>Saccharomyces</taxon>
    </lineage>
</organism>
<protein>
    <recommendedName>
        <fullName>Suppressor of hydroxyurea sensitivity protein 2</fullName>
    </recommendedName>
</protein>
<dbReference type="EMBL" id="AAFW02000145">
    <property type="protein sequence ID" value="EDN60423.1"/>
    <property type="molecule type" value="Genomic_DNA"/>
</dbReference>
<dbReference type="SMR" id="A6ZY43"/>
<dbReference type="HOGENOM" id="CLU_1115918_0_0_1"/>
<dbReference type="Proteomes" id="UP000007060">
    <property type="component" value="Unassembled WGS sequence"/>
</dbReference>
<dbReference type="GO" id="GO:0005634">
    <property type="term" value="C:nucleus"/>
    <property type="evidence" value="ECO:0007669"/>
    <property type="project" value="UniProtKB-SubCell"/>
</dbReference>
<dbReference type="GO" id="GO:0006310">
    <property type="term" value="P:DNA recombination"/>
    <property type="evidence" value="ECO:0007669"/>
    <property type="project" value="UniProtKB-KW"/>
</dbReference>
<dbReference type="GO" id="GO:0006281">
    <property type="term" value="P:DNA repair"/>
    <property type="evidence" value="ECO:0007669"/>
    <property type="project" value="UniProtKB-KW"/>
</dbReference>
<reference key="1">
    <citation type="journal article" date="2007" name="Proc. Natl. Acad. Sci. U.S.A.">
        <title>Genome sequencing and comparative analysis of Saccharomyces cerevisiae strain YJM789.</title>
        <authorList>
            <person name="Wei W."/>
            <person name="McCusker J.H."/>
            <person name="Hyman R.W."/>
            <person name="Jones T."/>
            <person name="Ning Y."/>
            <person name="Cao Z."/>
            <person name="Gu Z."/>
            <person name="Bruno D."/>
            <person name="Miranda M."/>
            <person name="Nguyen M."/>
            <person name="Wilhelmy J."/>
            <person name="Komp C."/>
            <person name="Tamse R."/>
            <person name="Wang X."/>
            <person name="Jia P."/>
            <person name="Luedi P."/>
            <person name="Oefner P.J."/>
            <person name="David L."/>
            <person name="Dietrich F.S."/>
            <person name="Li Y."/>
            <person name="Davis R.W."/>
            <person name="Steinmetz L.M."/>
        </authorList>
    </citation>
    <scope>NUCLEOTIDE SEQUENCE [LARGE SCALE GENOMIC DNA]</scope>
    <source>
        <strain>YJM789</strain>
    </source>
</reference>
<accession>A6ZY43</accession>
<name>SHU2_YEAS7</name>
<keyword id="KW-0227">DNA damage</keyword>
<keyword id="KW-0233">DNA recombination</keyword>
<keyword id="KW-0234">DNA repair</keyword>
<keyword id="KW-0539">Nucleus</keyword>
<sequence length="223" mass="26137">MSKDVIEYSKLFAKLVNTNDDTKLDDTIASFLYYMFPRELFIRAISLLESSDMFIYILDRVHNKEGNEHTSLIDVLVDEFYKGSSNSLLEYRLIVKDTNDGAPPILVDIAHWFCSCEEFCKYFHEALEKTDEKEELHDVLINEVDDHLQFSDDRFAQLDPHSLSKQWYFKFDKICCSHLLAFSILLRSSINVLKFFTVNSNKVFVIAIDNIDEWLNLHINIVE</sequence>